<proteinExistence type="inferred from homology"/>
<dbReference type="EC" id="5.3.1.16" evidence="1"/>
<dbReference type="EMBL" id="CP000446">
    <property type="protein sequence ID" value="ABI38869.1"/>
    <property type="molecule type" value="Genomic_DNA"/>
</dbReference>
<dbReference type="RefSeq" id="WP_011622566.1">
    <property type="nucleotide sequence ID" value="NC_008321.1"/>
</dbReference>
<dbReference type="SMR" id="Q0HJ98"/>
<dbReference type="KEGG" id="she:Shewmr4_1795"/>
<dbReference type="HOGENOM" id="CLU_048577_1_2_6"/>
<dbReference type="UniPathway" id="UPA00031">
    <property type="reaction ID" value="UER00009"/>
</dbReference>
<dbReference type="GO" id="GO:0005737">
    <property type="term" value="C:cytoplasm"/>
    <property type="evidence" value="ECO:0007669"/>
    <property type="project" value="UniProtKB-SubCell"/>
</dbReference>
<dbReference type="GO" id="GO:0003949">
    <property type="term" value="F:1-(5-phosphoribosyl)-5-[(5-phosphoribosylamino)methylideneamino]imidazole-4-carboxamide isomerase activity"/>
    <property type="evidence" value="ECO:0007669"/>
    <property type="project" value="UniProtKB-UniRule"/>
</dbReference>
<dbReference type="GO" id="GO:0000105">
    <property type="term" value="P:L-histidine biosynthetic process"/>
    <property type="evidence" value="ECO:0007669"/>
    <property type="project" value="UniProtKB-UniRule"/>
</dbReference>
<dbReference type="GO" id="GO:0000162">
    <property type="term" value="P:L-tryptophan biosynthetic process"/>
    <property type="evidence" value="ECO:0007669"/>
    <property type="project" value="TreeGrafter"/>
</dbReference>
<dbReference type="CDD" id="cd04732">
    <property type="entry name" value="HisA"/>
    <property type="match status" value="1"/>
</dbReference>
<dbReference type="FunFam" id="3.20.20.70:FF:000009">
    <property type="entry name" value="1-(5-phosphoribosyl)-5-[(5-phosphoribosylamino)methylideneamino] imidazole-4-carboxamide isomerase"/>
    <property type="match status" value="1"/>
</dbReference>
<dbReference type="Gene3D" id="3.20.20.70">
    <property type="entry name" value="Aldolase class I"/>
    <property type="match status" value="1"/>
</dbReference>
<dbReference type="HAMAP" id="MF_01014">
    <property type="entry name" value="HisA"/>
    <property type="match status" value="1"/>
</dbReference>
<dbReference type="InterPro" id="IPR013785">
    <property type="entry name" value="Aldolase_TIM"/>
</dbReference>
<dbReference type="InterPro" id="IPR006062">
    <property type="entry name" value="His_biosynth"/>
</dbReference>
<dbReference type="InterPro" id="IPR006063">
    <property type="entry name" value="HisA_bact_arch"/>
</dbReference>
<dbReference type="InterPro" id="IPR044524">
    <property type="entry name" value="Isoase_HisA-like"/>
</dbReference>
<dbReference type="InterPro" id="IPR023016">
    <property type="entry name" value="Isoase_HisA-like_bact"/>
</dbReference>
<dbReference type="InterPro" id="IPR011060">
    <property type="entry name" value="RibuloseP-bd_barrel"/>
</dbReference>
<dbReference type="NCBIfam" id="TIGR00007">
    <property type="entry name" value="1-(5-phosphoribosyl)-5-[(5-phosphoribosylamino)methylideneamino]imidazole-4-carboxamide isomerase"/>
    <property type="match status" value="1"/>
</dbReference>
<dbReference type="PANTHER" id="PTHR43090">
    <property type="entry name" value="1-(5-PHOSPHORIBOSYL)-5-[(5-PHOSPHORIBOSYLAMINO)METHYLIDENEAMINO] IMIDAZOLE-4-CARBOXAMIDE ISOMERASE"/>
    <property type="match status" value="1"/>
</dbReference>
<dbReference type="PANTHER" id="PTHR43090:SF2">
    <property type="entry name" value="1-(5-PHOSPHORIBOSYL)-5-[(5-PHOSPHORIBOSYLAMINO)METHYLIDENEAMINO] IMIDAZOLE-4-CARBOXAMIDE ISOMERASE"/>
    <property type="match status" value="1"/>
</dbReference>
<dbReference type="Pfam" id="PF00977">
    <property type="entry name" value="His_biosynth"/>
    <property type="match status" value="1"/>
</dbReference>
<dbReference type="SUPFAM" id="SSF51366">
    <property type="entry name" value="Ribulose-phoshate binding barrel"/>
    <property type="match status" value="1"/>
</dbReference>
<gene>
    <name evidence="1" type="primary">hisA</name>
    <name type="ordered locus">Shewmr4_1795</name>
</gene>
<organism>
    <name type="scientific">Shewanella sp. (strain MR-4)</name>
    <dbReference type="NCBI Taxonomy" id="60480"/>
    <lineage>
        <taxon>Bacteria</taxon>
        <taxon>Pseudomonadati</taxon>
        <taxon>Pseudomonadota</taxon>
        <taxon>Gammaproteobacteria</taxon>
        <taxon>Alteromonadales</taxon>
        <taxon>Shewanellaceae</taxon>
        <taxon>Shewanella</taxon>
    </lineage>
</organism>
<accession>Q0HJ98</accession>
<reference key="1">
    <citation type="submission" date="2006-08" db="EMBL/GenBank/DDBJ databases">
        <title>Complete sequence of Shewanella sp. MR-4.</title>
        <authorList>
            <consortium name="US DOE Joint Genome Institute"/>
            <person name="Copeland A."/>
            <person name="Lucas S."/>
            <person name="Lapidus A."/>
            <person name="Barry K."/>
            <person name="Detter J.C."/>
            <person name="Glavina del Rio T."/>
            <person name="Hammon N."/>
            <person name="Israni S."/>
            <person name="Dalin E."/>
            <person name="Tice H."/>
            <person name="Pitluck S."/>
            <person name="Kiss H."/>
            <person name="Brettin T."/>
            <person name="Bruce D."/>
            <person name="Han C."/>
            <person name="Tapia R."/>
            <person name="Gilna P."/>
            <person name="Schmutz J."/>
            <person name="Larimer F."/>
            <person name="Land M."/>
            <person name="Hauser L."/>
            <person name="Kyrpides N."/>
            <person name="Mikhailova N."/>
            <person name="Nealson K."/>
            <person name="Konstantinidis K."/>
            <person name="Klappenbach J."/>
            <person name="Tiedje J."/>
            <person name="Richardson P."/>
        </authorList>
    </citation>
    <scope>NUCLEOTIDE SEQUENCE [LARGE SCALE GENOMIC DNA]</scope>
    <source>
        <strain>MR-4</strain>
    </source>
</reference>
<comment type="catalytic activity">
    <reaction evidence="1">
        <text>1-(5-phospho-beta-D-ribosyl)-5-[(5-phospho-beta-D-ribosylamino)methylideneamino]imidazole-4-carboxamide = 5-[(5-phospho-1-deoxy-D-ribulos-1-ylimino)methylamino]-1-(5-phospho-beta-D-ribosyl)imidazole-4-carboxamide</text>
        <dbReference type="Rhea" id="RHEA:15469"/>
        <dbReference type="ChEBI" id="CHEBI:58435"/>
        <dbReference type="ChEBI" id="CHEBI:58525"/>
        <dbReference type="EC" id="5.3.1.16"/>
    </reaction>
</comment>
<comment type="pathway">
    <text evidence="1">Amino-acid biosynthesis; L-histidine biosynthesis; L-histidine from 5-phospho-alpha-D-ribose 1-diphosphate: step 4/9.</text>
</comment>
<comment type="subcellular location">
    <subcellularLocation>
        <location evidence="1">Cytoplasm</location>
    </subcellularLocation>
</comment>
<comment type="similarity">
    <text evidence="1">Belongs to the HisA/HisF family.</text>
</comment>
<keyword id="KW-0028">Amino-acid biosynthesis</keyword>
<keyword id="KW-0963">Cytoplasm</keyword>
<keyword id="KW-0368">Histidine biosynthesis</keyword>
<keyword id="KW-0413">Isomerase</keyword>
<sequence length="245" mass="26149">MIIPAIDLIDGKVVRLYQGDYGQQTTFDLSPLAQLQSYQDQGANWLHIVDLTGAKEPAKRQTTLIAKLTAGLSANIQVGGGIRTEEQVAELLSLGVKRVVIGSLAVKEPELVKGWFNKFGSEAICLALDVNINQSGEKIVAVSGWQSGGGKSLESIVEDFSQVGLKHALVTDISRDGTLTGANTELYRELSSRYPDIAWQASGGIATLEDVAAVRDSGAAGIIIGKALLINQFNVAEAIQCWPNE</sequence>
<feature type="chain" id="PRO_0000290539" description="1-(5-phosphoribosyl)-5-[(5-phosphoribosylamino)methylideneamino] imidazole-4-carboxamide isomerase">
    <location>
        <begin position="1"/>
        <end position="245"/>
    </location>
</feature>
<feature type="active site" description="Proton acceptor" evidence="1">
    <location>
        <position position="7"/>
    </location>
</feature>
<feature type="active site" description="Proton donor" evidence="1">
    <location>
        <position position="129"/>
    </location>
</feature>
<evidence type="ECO:0000255" key="1">
    <source>
        <dbReference type="HAMAP-Rule" id="MF_01014"/>
    </source>
</evidence>
<protein>
    <recommendedName>
        <fullName evidence="1">1-(5-phosphoribosyl)-5-[(5-phosphoribosylamino)methylideneamino] imidazole-4-carboxamide isomerase</fullName>
        <ecNumber evidence="1">5.3.1.16</ecNumber>
    </recommendedName>
    <alternativeName>
        <fullName evidence="1">Phosphoribosylformimino-5-aminoimidazole carboxamide ribotide isomerase</fullName>
    </alternativeName>
</protein>
<name>HIS4_SHESM</name>